<organism>
    <name type="scientific">Pan troglodytes</name>
    <name type="common">Chimpanzee</name>
    <dbReference type="NCBI Taxonomy" id="9598"/>
    <lineage>
        <taxon>Eukaryota</taxon>
        <taxon>Metazoa</taxon>
        <taxon>Chordata</taxon>
        <taxon>Craniata</taxon>
        <taxon>Vertebrata</taxon>
        <taxon>Euteleostomi</taxon>
        <taxon>Mammalia</taxon>
        <taxon>Eutheria</taxon>
        <taxon>Euarchontoglires</taxon>
        <taxon>Primates</taxon>
        <taxon>Haplorrhini</taxon>
        <taxon>Catarrhini</taxon>
        <taxon>Hominidae</taxon>
        <taxon>Pan</taxon>
    </lineage>
</organism>
<sequence length="147" mass="16859">MALQRTHSLLLLLLLTLLGLGLVQPSYGQDGMYQRFLRQHVHPEETGGSDRYCNLMMQRRKMTLYHCKRFNTFIHEDIWNIRSICSTTNIQCKNGKMNCHEGVVKVTDCRDTGSSRAPNCRYRAMASTRRVVIACEGNPQVPVHFDG</sequence>
<accession>Q8HZQ0</accession>
<comment type="function">
    <text evidence="4">Cleaves preferentially after uridine bases. Has antimicrobial activity against uropathogenic E.coli (UPEC). Probably contributes to urinary tract sterility.</text>
</comment>
<comment type="subcellular location">
    <subcellularLocation>
        <location evidence="4">Secreted</location>
    </subcellularLocation>
    <text evidence="4">Detected in urine.</text>
</comment>
<comment type="similarity">
    <text evidence="6">Belongs to the pancreatic ribonuclease family.</text>
</comment>
<reference key="1">
    <citation type="journal article" date="2002" name="Genetics">
        <title>Accelerated protein evolution and origins of human-specific features: Foxp2 as an example.</title>
        <authorList>
            <person name="Zhang J."/>
            <person name="Webb D.M."/>
            <person name="Podlaha O."/>
        </authorList>
    </citation>
    <scope>NUCLEOTIDE SEQUENCE [GENOMIC DNA]</scope>
</reference>
<protein>
    <recommendedName>
        <fullName>Ribonuclease 4</fullName>
        <shortName>RNase 4</shortName>
        <ecNumber evidence="4">3.1.27.-</ecNumber>
    </recommendedName>
</protein>
<dbReference type="EC" id="3.1.27.-" evidence="4"/>
<dbReference type="EMBL" id="AF539548">
    <property type="protein sequence ID" value="AAN10132.1"/>
    <property type="molecule type" value="Genomic_DNA"/>
</dbReference>
<dbReference type="RefSeq" id="NP_001009107.1">
    <property type="nucleotide sequence ID" value="NM_001009107.1"/>
</dbReference>
<dbReference type="RefSeq" id="XP_009425635.1">
    <property type="nucleotide sequence ID" value="XM_009427360.2"/>
</dbReference>
<dbReference type="RefSeq" id="XP_009425636.1">
    <property type="nucleotide sequence ID" value="XM_009427361.3"/>
</dbReference>
<dbReference type="RefSeq" id="XP_009425637.1">
    <property type="nucleotide sequence ID" value="XM_009427362.2"/>
</dbReference>
<dbReference type="RefSeq" id="XP_063648809.1">
    <property type="nucleotide sequence ID" value="XM_063792739.1"/>
</dbReference>
<dbReference type="RefSeq" id="XP_063648810.1">
    <property type="nucleotide sequence ID" value="XM_063792740.1"/>
</dbReference>
<dbReference type="SMR" id="Q8HZQ0"/>
<dbReference type="FunCoup" id="Q8HZQ0">
    <property type="interactions" value="385"/>
</dbReference>
<dbReference type="STRING" id="9598.ENSPTRP00000087897"/>
<dbReference type="PaxDb" id="9598-ENSPTRP00000054975"/>
<dbReference type="Ensembl" id="ENSPTRT00000088422.1">
    <property type="protein sequence ID" value="ENSPTRP00000087897.1"/>
    <property type="gene ID" value="ENSPTRG00000044163.1"/>
</dbReference>
<dbReference type="GeneID" id="465205"/>
<dbReference type="CTD" id="6038"/>
<dbReference type="VGNC" id="VGNC:6797">
    <property type="gene designation" value="RNASE4"/>
</dbReference>
<dbReference type="eggNOG" id="ENOG502S9Q1">
    <property type="taxonomic scope" value="Eukaryota"/>
</dbReference>
<dbReference type="GeneTree" id="ENSGT00940000157645"/>
<dbReference type="HOGENOM" id="CLU_117006_3_1_1"/>
<dbReference type="InParanoid" id="Q8HZQ0"/>
<dbReference type="OMA" id="ATSHHCK"/>
<dbReference type="TreeFam" id="TF333393"/>
<dbReference type="Proteomes" id="UP000002277">
    <property type="component" value="Chromosome 14"/>
</dbReference>
<dbReference type="Bgee" id="ENSPTRG00000044163">
    <property type="expression patterns" value="Expressed in liver and 21 other cell types or tissues"/>
</dbReference>
<dbReference type="GO" id="GO:0005615">
    <property type="term" value="C:extracellular space"/>
    <property type="evidence" value="ECO:0000250"/>
    <property type="project" value="UniProtKB"/>
</dbReference>
<dbReference type="GO" id="GO:0004519">
    <property type="term" value="F:endonuclease activity"/>
    <property type="evidence" value="ECO:0007669"/>
    <property type="project" value="UniProtKB-KW"/>
</dbReference>
<dbReference type="GO" id="GO:0003676">
    <property type="term" value="F:nucleic acid binding"/>
    <property type="evidence" value="ECO:0007669"/>
    <property type="project" value="InterPro"/>
</dbReference>
<dbReference type="GO" id="GO:0004540">
    <property type="term" value="F:RNA nuclease activity"/>
    <property type="evidence" value="ECO:0000318"/>
    <property type="project" value="GO_Central"/>
</dbReference>
<dbReference type="GO" id="GO:0019731">
    <property type="term" value="P:antibacterial humoral response"/>
    <property type="evidence" value="ECO:0000250"/>
    <property type="project" value="UniProtKB"/>
</dbReference>
<dbReference type="GO" id="GO:0050830">
    <property type="term" value="P:defense response to Gram-positive bacterium"/>
    <property type="evidence" value="ECO:0000318"/>
    <property type="project" value="GO_Central"/>
</dbReference>
<dbReference type="CDD" id="cd06265">
    <property type="entry name" value="RNase_A_canonical"/>
    <property type="match status" value="1"/>
</dbReference>
<dbReference type="FunFam" id="3.10.130.10:FF:000001">
    <property type="entry name" value="Ribonuclease pancreatic"/>
    <property type="match status" value="1"/>
</dbReference>
<dbReference type="Gene3D" id="3.10.130.10">
    <property type="entry name" value="Ribonuclease A-like domain"/>
    <property type="match status" value="1"/>
</dbReference>
<dbReference type="InterPro" id="IPR001427">
    <property type="entry name" value="RNaseA"/>
</dbReference>
<dbReference type="InterPro" id="IPR036816">
    <property type="entry name" value="RNaseA-like_dom_sf"/>
</dbReference>
<dbReference type="InterPro" id="IPR023411">
    <property type="entry name" value="RNaseA_AS"/>
</dbReference>
<dbReference type="InterPro" id="IPR023412">
    <property type="entry name" value="RNaseA_domain"/>
</dbReference>
<dbReference type="PANTHER" id="PTHR11437">
    <property type="entry name" value="RIBONUCLEASE"/>
    <property type="match status" value="1"/>
</dbReference>
<dbReference type="PANTHER" id="PTHR11437:SF53">
    <property type="entry name" value="RIBONUCLEASE 4"/>
    <property type="match status" value="1"/>
</dbReference>
<dbReference type="Pfam" id="PF00074">
    <property type="entry name" value="RnaseA"/>
    <property type="match status" value="1"/>
</dbReference>
<dbReference type="PRINTS" id="PR00794">
    <property type="entry name" value="RIBONUCLEASE"/>
</dbReference>
<dbReference type="SMART" id="SM00092">
    <property type="entry name" value="RNAse_Pc"/>
    <property type="match status" value="1"/>
</dbReference>
<dbReference type="SUPFAM" id="SSF54076">
    <property type="entry name" value="RNase A-like"/>
    <property type="match status" value="1"/>
</dbReference>
<dbReference type="PROSITE" id="PS00127">
    <property type="entry name" value="RNASE_PANCREATIC"/>
    <property type="match status" value="1"/>
</dbReference>
<evidence type="ECO:0000250" key="1"/>
<evidence type="ECO:0000250" key="2">
    <source>
        <dbReference type="UniProtKB" id="P15467"/>
    </source>
</evidence>
<evidence type="ECO:0000250" key="3">
    <source>
        <dbReference type="UniProtKB" id="P15468"/>
    </source>
</evidence>
<evidence type="ECO:0000250" key="4">
    <source>
        <dbReference type="UniProtKB" id="P34096"/>
    </source>
</evidence>
<evidence type="ECO:0000250" key="5">
    <source>
        <dbReference type="UniProtKB" id="Q9H1E1"/>
    </source>
</evidence>
<evidence type="ECO:0000305" key="6"/>
<name>RNAS4_PANTR</name>
<proteinExistence type="inferred from homology"/>
<keyword id="KW-0044">Antibiotic</keyword>
<keyword id="KW-0929">Antimicrobial</keyword>
<keyword id="KW-1015">Disulfide bond</keyword>
<keyword id="KW-0255">Endonuclease</keyword>
<keyword id="KW-0378">Hydrolase</keyword>
<keyword id="KW-0540">Nuclease</keyword>
<keyword id="KW-0873">Pyrrolidone carboxylic acid</keyword>
<keyword id="KW-1185">Reference proteome</keyword>
<keyword id="KW-0964">Secreted</keyword>
<keyword id="KW-0732">Signal</keyword>
<feature type="signal peptide" evidence="1">
    <location>
        <begin position="1"/>
        <end position="28"/>
    </location>
</feature>
<feature type="chain" id="PRO_0000030884" description="Ribonuclease 4">
    <location>
        <begin position="29"/>
        <end position="147"/>
    </location>
</feature>
<feature type="active site" description="Proton acceptor" evidence="5">
    <location>
        <position position="40"/>
    </location>
</feature>
<feature type="active site" description="Proton donor" evidence="5">
    <location>
        <position position="144"/>
    </location>
</feature>
<feature type="binding site" evidence="3">
    <location>
        <position position="35"/>
    </location>
    <ligand>
        <name>dUMP</name>
        <dbReference type="ChEBI" id="CHEBI:246422"/>
    </ligand>
</feature>
<feature type="binding site" evidence="3">
    <location>
        <position position="40"/>
    </location>
    <ligand>
        <name>dUMP</name>
        <dbReference type="ChEBI" id="CHEBI:246422"/>
    </ligand>
</feature>
<feature type="binding site" evidence="3">
    <location>
        <position position="68"/>
    </location>
    <ligand>
        <name>dUMP</name>
        <dbReference type="ChEBI" id="CHEBI:246422"/>
    </ligand>
</feature>
<feature type="binding site" evidence="3">
    <location>
        <position position="71"/>
    </location>
    <ligand>
        <name>dUMP</name>
        <dbReference type="ChEBI" id="CHEBI:246422"/>
    </ligand>
</feature>
<feature type="binding site" evidence="3">
    <location>
        <position position="72"/>
    </location>
    <ligand>
        <name>dUMP</name>
        <dbReference type="ChEBI" id="CHEBI:246422"/>
    </ligand>
</feature>
<feature type="binding site" evidence="3">
    <location>
        <position position="145"/>
    </location>
    <ligand>
        <name>dUMP</name>
        <dbReference type="ChEBI" id="CHEBI:246422"/>
    </ligand>
</feature>
<feature type="modified residue" description="Pyrrolidone carboxylic acid" evidence="2">
    <location>
        <position position="29"/>
    </location>
</feature>
<feature type="disulfide bond" evidence="4">
    <location>
        <begin position="53"/>
        <end position="109"/>
    </location>
</feature>
<feature type="disulfide bond" evidence="4">
    <location>
        <begin position="67"/>
        <end position="120"/>
    </location>
</feature>
<feature type="disulfide bond" evidence="4">
    <location>
        <begin position="85"/>
        <end position="135"/>
    </location>
</feature>
<feature type="disulfide bond" evidence="4">
    <location>
        <begin position="92"/>
        <end position="99"/>
    </location>
</feature>
<gene>
    <name type="primary">RNASE4</name>
    <name type="synonym">RNS4</name>
</gene>